<organism>
    <name type="scientific">Thermus thermophilus (strain ATCC BAA-163 / DSM 7039 / HB27)</name>
    <dbReference type="NCBI Taxonomy" id="262724"/>
    <lineage>
        <taxon>Bacteria</taxon>
        <taxon>Thermotogati</taxon>
        <taxon>Deinococcota</taxon>
        <taxon>Deinococci</taxon>
        <taxon>Thermales</taxon>
        <taxon>Thermaceae</taxon>
        <taxon>Thermus</taxon>
    </lineage>
</organism>
<evidence type="ECO:0000255" key="1">
    <source>
        <dbReference type="HAMAP-Rule" id="MF_00144"/>
    </source>
</evidence>
<accession>Q72GX1</accession>
<feature type="chain" id="PRO_0000349846" description="tRNA-specific 2-thiouridylase MnmA">
    <location>
        <begin position="1"/>
        <end position="367"/>
    </location>
</feature>
<feature type="region of interest" description="Interaction with tRNA" evidence="1">
    <location>
        <begin position="150"/>
        <end position="152"/>
    </location>
</feature>
<feature type="region of interest" description="Interaction with tRNA" evidence="1">
    <location>
        <begin position="301"/>
        <end position="302"/>
    </location>
</feature>
<feature type="active site" description="Nucleophile" evidence="1">
    <location>
        <position position="108"/>
    </location>
</feature>
<feature type="active site" description="Cysteine persulfide intermediate" evidence="1">
    <location>
        <position position="200"/>
    </location>
</feature>
<feature type="binding site" evidence="1">
    <location>
        <begin position="7"/>
        <end position="14"/>
    </location>
    <ligand>
        <name>ATP</name>
        <dbReference type="ChEBI" id="CHEBI:30616"/>
    </ligand>
</feature>
<feature type="binding site" evidence="1">
    <location>
        <position position="33"/>
    </location>
    <ligand>
        <name>ATP</name>
        <dbReference type="ChEBI" id="CHEBI:30616"/>
    </ligand>
</feature>
<feature type="binding site" evidence="1">
    <location>
        <position position="132"/>
    </location>
    <ligand>
        <name>ATP</name>
        <dbReference type="ChEBI" id="CHEBI:30616"/>
    </ligand>
</feature>
<feature type="site" description="Interaction with tRNA" evidence="1">
    <location>
        <position position="133"/>
    </location>
</feature>
<feature type="site" description="Interaction with tRNA" evidence="1">
    <location>
        <position position="332"/>
    </location>
</feature>
<feature type="disulfide bond" description="Alternate" evidence="1">
    <location>
        <begin position="108"/>
        <end position="200"/>
    </location>
</feature>
<gene>
    <name evidence="1" type="primary">mnmA</name>
    <name type="ordered locus">TT_C1727</name>
</gene>
<reference key="1">
    <citation type="journal article" date="2004" name="Nat. Biotechnol.">
        <title>The genome sequence of the extreme thermophile Thermus thermophilus.</title>
        <authorList>
            <person name="Henne A."/>
            <person name="Brueggemann H."/>
            <person name="Raasch C."/>
            <person name="Wiezer A."/>
            <person name="Hartsch T."/>
            <person name="Liesegang H."/>
            <person name="Johann A."/>
            <person name="Lienard T."/>
            <person name="Gohl O."/>
            <person name="Martinez-Arias R."/>
            <person name="Jacobi C."/>
            <person name="Starkuviene V."/>
            <person name="Schlenczeck S."/>
            <person name="Dencker S."/>
            <person name="Huber R."/>
            <person name="Klenk H.-P."/>
            <person name="Kramer W."/>
            <person name="Merkl R."/>
            <person name="Gottschalk G."/>
            <person name="Fritz H.-J."/>
        </authorList>
    </citation>
    <scope>NUCLEOTIDE SEQUENCE [LARGE SCALE GENOMIC DNA]</scope>
    <source>
        <strain>ATCC BAA-163 / DSM 7039 / HB27</strain>
    </source>
</reference>
<protein>
    <recommendedName>
        <fullName evidence="1">tRNA-specific 2-thiouridylase MnmA</fullName>
        <ecNumber evidence="1">2.8.1.13</ecNumber>
    </recommendedName>
</protein>
<dbReference type="EC" id="2.8.1.13" evidence="1"/>
<dbReference type="EMBL" id="AE017221">
    <property type="protein sequence ID" value="AAS82069.1"/>
    <property type="molecule type" value="Genomic_DNA"/>
</dbReference>
<dbReference type="RefSeq" id="WP_011174090.1">
    <property type="nucleotide sequence ID" value="NC_005835.1"/>
</dbReference>
<dbReference type="SMR" id="Q72GX1"/>
<dbReference type="GeneID" id="3168732"/>
<dbReference type="KEGG" id="tth:TT_C1727"/>
<dbReference type="eggNOG" id="COG0482">
    <property type="taxonomic scope" value="Bacteria"/>
</dbReference>
<dbReference type="HOGENOM" id="CLU_035188_0_0_0"/>
<dbReference type="OrthoDB" id="9800696at2"/>
<dbReference type="Proteomes" id="UP000000592">
    <property type="component" value="Chromosome"/>
</dbReference>
<dbReference type="GO" id="GO:0005737">
    <property type="term" value="C:cytoplasm"/>
    <property type="evidence" value="ECO:0007669"/>
    <property type="project" value="UniProtKB-SubCell"/>
</dbReference>
<dbReference type="GO" id="GO:0005524">
    <property type="term" value="F:ATP binding"/>
    <property type="evidence" value="ECO:0007669"/>
    <property type="project" value="UniProtKB-KW"/>
</dbReference>
<dbReference type="GO" id="GO:0000049">
    <property type="term" value="F:tRNA binding"/>
    <property type="evidence" value="ECO:0007669"/>
    <property type="project" value="UniProtKB-KW"/>
</dbReference>
<dbReference type="GO" id="GO:0103016">
    <property type="term" value="F:tRNA-uridine 2-sulfurtransferase activity"/>
    <property type="evidence" value="ECO:0007669"/>
    <property type="project" value="UniProtKB-EC"/>
</dbReference>
<dbReference type="GO" id="GO:0002143">
    <property type="term" value="P:tRNA wobble position uridine thiolation"/>
    <property type="evidence" value="ECO:0007669"/>
    <property type="project" value="TreeGrafter"/>
</dbReference>
<dbReference type="CDD" id="cd01998">
    <property type="entry name" value="MnmA_TRMU-like"/>
    <property type="match status" value="1"/>
</dbReference>
<dbReference type="FunFam" id="2.30.30.280:FF:000001">
    <property type="entry name" value="tRNA-specific 2-thiouridylase MnmA"/>
    <property type="match status" value="1"/>
</dbReference>
<dbReference type="FunFam" id="3.40.50.620:FF:000115">
    <property type="entry name" value="tRNA-specific 2-thiouridylase MnmA"/>
    <property type="match status" value="1"/>
</dbReference>
<dbReference type="Gene3D" id="2.30.30.280">
    <property type="entry name" value="Adenine nucleotide alpha hydrolases-like domains"/>
    <property type="match status" value="1"/>
</dbReference>
<dbReference type="Gene3D" id="3.40.50.620">
    <property type="entry name" value="HUPs"/>
    <property type="match status" value="1"/>
</dbReference>
<dbReference type="Gene3D" id="2.40.30.10">
    <property type="entry name" value="Translation factors"/>
    <property type="match status" value="1"/>
</dbReference>
<dbReference type="HAMAP" id="MF_00144">
    <property type="entry name" value="tRNA_thiouridyl_MnmA"/>
    <property type="match status" value="1"/>
</dbReference>
<dbReference type="InterPro" id="IPR004506">
    <property type="entry name" value="MnmA-like"/>
</dbReference>
<dbReference type="InterPro" id="IPR046885">
    <property type="entry name" value="MnmA-like_C"/>
</dbReference>
<dbReference type="InterPro" id="IPR046884">
    <property type="entry name" value="MnmA-like_central"/>
</dbReference>
<dbReference type="InterPro" id="IPR023382">
    <property type="entry name" value="MnmA-like_central_sf"/>
</dbReference>
<dbReference type="InterPro" id="IPR014729">
    <property type="entry name" value="Rossmann-like_a/b/a_fold"/>
</dbReference>
<dbReference type="NCBIfam" id="NF001138">
    <property type="entry name" value="PRK00143.1"/>
    <property type="match status" value="1"/>
</dbReference>
<dbReference type="NCBIfam" id="TIGR00420">
    <property type="entry name" value="trmU"/>
    <property type="match status" value="1"/>
</dbReference>
<dbReference type="PANTHER" id="PTHR11933:SF5">
    <property type="entry name" value="MITOCHONDRIAL TRNA-SPECIFIC 2-THIOURIDYLASE 1"/>
    <property type="match status" value="1"/>
</dbReference>
<dbReference type="PANTHER" id="PTHR11933">
    <property type="entry name" value="TRNA 5-METHYLAMINOMETHYL-2-THIOURIDYLATE -METHYLTRANSFERASE"/>
    <property type="match status" value="1"/>
</dbReference>
<dbReference type="Pfam" id="PF03054">
    <property type="entry name" value="tRNA_Me_trans"/>
    <property type="match status" value="1"/>
</dbReference>
<dbReference type="Pfam" id="PF20258">
    <property type="entry name" value="tRNA_Me_trans_C"/>
    <property type="match status" value="1"/>
</dbReference>
<dbReference type="Pfam" id="PF20259">
    <property type="entry name" value="tRNA_Me_trans_M"/>
    <property type="match status" value="1"/>
</dbReference>
<dbReference type="SUPFAM" id="SSF52402">
    <property type="entry name" value="Adenine nucleotide alpha hydrolases-like"/>
    <property type="match status" value="1"/>
</dbReference>
<name>MNMA_THET2</name>
<keyword id="KW-0067">ATP-binding</keyword>
<keyword id="KW-0963">Cytoplasm</keyword>
<keyword id="KW-1015">Disulfide bond</keyword>
<keyword id="KW-0547">Nucleotide-binding</keyword>
<keyword id="KW-0694">RNA-binding</keyword>
<keyword id="KW-0808">Transferase</keyword>
<keyword id="KW-0819">tRNA processing</keyword>
<keyword id="KW-0820">tRNA-binding</keyword>
<sequence length="367" mass="40621">MKRVLVAMSGGVDSSVAALLLKEAGYEVVGAMMRFWPDLPPPSLEAGKPRAWESCCTPDAAYEARRVADRLGIPFYLLDYREVFEEEIISPFLQDYAQGRTPNPCARCNTFVKFGALLKQARRLGLDYVATGHYVRKEGLALLRGLDPHKDQTYFLWGTPKEALPHLLFPVGGLTKPEVRALAEKAGLPTARRPESQNLCFVAGDLKGFLKERLKPRPGPLVDALTGEVVGEHEGASLYTLGQRKGLGLYKTHLERYVVGVDPERNVVYVGPKEACYFEGLEGEGLNLLAELPEEVEVQVRYRTPPVRAKVESLSPLRLRFAHPVFAVTPGQSAVFYRGERLLGGAVIRRGLYNLAGLEDPRALTFS</sequence>
<proteinExistence type="inferred from homology"/>
<comment type="function">
    <text evidence="1">Catalyzes the 2-thiolation of uridine at the wobble position (U34) of tRNA, leading to the formation of s(2)U34.</text>
</comment>
<comment type="catalytic activity">
    <reaction evidence="1">
        <text>S-sulfanyl-L-cysteinyl-[protein] + uridine(34) in tRNA + AH2 + ATP = 2-thiouridine(34) in tRNA + L-cysteinyl-[protein] + A + AMP + diphosphate + H(+)</text>
        <dbReference type="Rhea" id="RHEA:47032"/>
        <dbReference type="Rhea" id="RHEA-COMP:10131"/>
        <dbReference type="Rhea" id="RHEA-COMP:11726"/>
        <dbReference type="Rhea" id="RHEA-COMP:11727"/>
        <dbReference type="Rhea" id="RHEA-COMP:11728"/>
        <dbReference type="ChEBI" id="CHEBI:13193"/>
        <dbReference type="ChEBI" id="CHEBI:15378"/>
        <dbReference type="ChEBI" id="CHEBI:17499"/>
        <dbReference type="ChEBI" id="CHEBI:29950"/>
        <dbReference type="ChEBI" id="CHEBI:30616"/>
        <dbReference type="ChEBI" id="CHEBI:33019"/>
        <dbReference type="ChEBI" id="CHEBI:61963"/>
        <dbReference type="ChEBI" id="CHEBI:65315"/>
        <dbReference type="ChEBI" id="CHEBI:87170"/>
        <dbReference type="ChEBI" id="CHEBI:456215"/>
        <dbReference type="EC" id="2.8.1.13"/>
    </reaction>
</comment>
<comment type="subcellular location">
    <subcellularLocation>
        <location evidence="1">Cytoplasm</location>
    </subcellularLocation>
</comment>
<comment type="similarity">
    <text evidence="1">Belongs to the MnmA/TRMU family.</text>
</comment>